<keyword id="KW-1032">Host cell membrane</keyword>
<keyword id="KW-1039">Host endosome</keyword>
<keyword id="KW-1043">Host membrane</keyword>
<keyword id="KW-0945">Host-virus interaction</keyword>
<keyword id="KW-1090">Inhibition of host innate immune response by virus</keyword>
<keyword id="KW-1114">Inhibition of host interferon signaling pathway by virus</keyword>
<keyword id="KW-1096">Inhibition of host JAK1 by virus</keyword>
<keyword id="KW-0922">Interferon antiviral system evasion</keyword>
<keyword id="KW-0472">Membrane</keyword>
<keyword id="KW-1198">Viral budding</keyword>
<keyword id="KW-1187">Viral budding via the host ESCRT complexes</keyword>
<keyword id="KW-0899">Viral immunoevasion</keyword>
<keyword id="KW-0468">Viral matrix protein</keyword>
<keyword id="KW-1188">Viral release from host cell</keyword>
<keyword id="KW-0946">Virion</keyword>
<gene>
    <name type="primary">VP40</name>
</gene>
<sequence length="303" mass="33718">MASSSNYNTYMQYLNPPPYADHGANQLIPADQLSNQHGITPNYVGDLNLDDQFKGNVCHAFTLEAIIDISAYNERTVKGVPAWLPLGIMSNFEYPLAHTVAALLTGSYTITQFTHNGQKFVRVNRLGTGIPAHPLRMLREGNQAFVQNMVIPRNFSTNQFTYNLTNLVLSVQKLPDDAWRPSKDKLIGNTMHPAVSVHPNLPPIVLPTVKKQAYRQHKNPNNGPLLAISGILHQLRVEKVPEKTSLFRISLPADMFSVKEGMMKKRGEGSPVVYFQAPENFPLNGFNNRQVVLAYANPTLSAV</sequence>
<protein>
    <recommendedName>
        <fullName>Matrix protein VP40</fullName>
    </recommendedName>
    <alternativeName>
        <fullName evidence="2">Marburg VP40</fullName>
        <shortName evidence="2">mVP40</shortName>
    </alternativeName>
    <alternativeName>
        <fullName>Membrane-associated protein VP40</fullName>
    </alternativeName>
</protein>
<feature type="chain" id="PRO_0000315000" description="Matrix protein VP40">
    <location>
        <begin position="1"/>
        <end position="303"/>
    </location>
</feature>
<feature type="short sequence motif" description="PPXY motif" evidence="1">
    <location>
        <begin position="16"/>
        <end position="19"/>
    </location>
</feature>
<name>VP40_MABVR</name>
<accession>Q1PDC8</accession>
<dbReference type="EMBL" id="DQ447649">
    <property type="protein sequence ID" value="ABE27070.1"/>
    <property type="molecule type" value="Genomic_RNA"/>
</dbReference>
<dbReference type="SMR" id="Q1PDC8"/>
<dbReference type="IntAct" id="Q1PDC8">
    <property type="interactions" value="8"/>
</dbReference>
<dbReference type="Proteomes" id="UP000008239">
    <property type="component" value="Genome"/>
</dbReference>
<dbReference type="GO" id="GO:0033645">
    <property type="term" value="C:host cell endomembrane system"/>
    <property type="evidence" value="ECO:0007669"/>
    <property type="project" value="UniProtKB-SubCell"/>
</dbReference>
<dbReference type="GO" id="GO:0044185">
    <property type="term" value="C:host cell late endosome membrane"/>
    <property type="evidence" value="ECO:0007669"/>
    <property type="project" value="UniProtKB-SubCell"/>
</dbReference>
<dbReference type="GO" id="GO:0020002">
    <property type="term" value="C:host cell plasma membrane"/>
    <property type="evidence" value="ECO:0007669"/>
    <property type="project" value="UniProtKB-SubCell"/>
</dbReference>
<dbReference type="GO" id="GO:0016020">
    <property type="term" value="C:membrane"/>
    <property type="evidence" value="ECO:0007669"/>
    <property type="project" value="UniProtKB-KW"/>
</dbReference>
<dbReference type="GO" id="GO:0055036">
    <property type="term" value="C:virion membrane"/>
    <property type="evidence" value="ECO:0007669"/>
    <property type="project" value="UniProtKB-SubCell"/>
</dbReference>
<dbReference type="GO" id="GO:0039660">
    <property type="term" value="F:structural constituent of virion"/>
    <property type="evidence" value="ECO:0007669"/>
    <property type="project" value="UniProtKB-KW"/>
</dbReference>
<dbReference type="GO" id="GO:0052170">
    <property type="term" value="P:symbiont-mediated suppression of host innate immune response"/>
    <property type="evidence" value="ECO:0007669"/>
    <property type="project" value="UniProtKB-KW"/>
</dbReference>
<dbReference type="GO" id="GO:0039576">
    <property type="term" value="P:symbiont-mediated suppression of host JAK-STAT cascade via inhibition of JAK1 activity"/>
    <property type="evidence" value="ECO:0007669"/>
    <property type="project" value="UniProtKB-KW"/>
</dbReference>
<dbReference type="GO" id="GO:0039502">
    <property type="term" value="P:symbiont-mediated suppression of host type I interferon-mediated signaling pathway"/>
    <property type="evidence" value="ECO:0007669"/>
    <property type="project" value="UniProtKB-KW"/>
</dbReference>
<dbReference type="GO" id="GO:0039702">
    <property type="term" value="P:viral budding via host ESCRT complex"/>
    <property type="evidence" value="ECO:0007669"/>
    <property type="project" value="UniProtKB-KW"/>
</dbReference>
<dbReference type="Gene3D" id="2.70.20.20">
    <property type="entry name" value="Matrix protein VP40, N-terminal domain"/>
    <property type="match status" value="1"/>
</dbReference>
<dbReference type="InterPro" id="IPR008986">
    <property type="entry name" value="EV_matrix"/>
</dbReference>
<dbReference type="InterPro" id="IPR043079">
    <property type="entry name" value="EV_matrix_protein_N"/>
</dbReference>
<dbReference type="InterPro" id="IPR038057">
    <property type="entry name" value="EV_matrix_sf"/>
</dbReference>
<dbReference type="Pfam" id="PF07447">
    <property type="entry name" value="Matrix_Filo"/>
    <property type="match status" value="1"/>
</dbReference>
<dbReference type="PIRSF" id="PIRSF018327">
    <property type="entry name" value="VP40_FiloV"/>
    <property type="match status" value="1"/>
</dbReference>
<dbReference type="SUPFAM" id="SSF50012">
    <property type="entry name" value="EV matrix protein"/>
    <property type="match status" value="1"/>
</dbReference>
<reference key="1">
    <citation type="journal article" date="2006" name="J. Virol.">
        <title>Marburgvirus genomics and association with a large hemorrhagic fever outbreak in Angola.</title>
        <authorList>
            <person name="Towner J.S."/>
            <person name="Khristova M.L."/>
            <person name="Sealy T.K."/>
            <person name="Vincent M.J."/>
            <person name="Erickson B.R."/>
            <person name="Bawiec D.A."/>
            <person name="Hartman A.L."/>
            <person name="Comer J.A."/>
            <person name="Zaki S.R."/>
            <person name="Stroeher U."/>
            <person name="Gomes da Silva F."/>
            <person name="del Castillo F."/>
            <person name="Rollin P.E."/>
            <person name="Ksiazek T.G."/>
            <person name="Nichol S.T."/>
        </authorList>
    </citation>
    <scope>NUCLEOTIDE SEQUENCE [GENOMIC RNA]</scope>
</reference>
<evidence type="ECO:0000250" key="1"/>
<evidence type="ECO:0000250" key="2">
    <source>
        <dbReference type="UniProtKB" id="P35260"/>
    </source>
</evidence>
<evidence type="ECO:0000250" key="3">
    <source>
        <dbReference type="UniProtKB" id="Q05128"/>
    </source>
</evidence>
<evidence type="ECO:0000305" key="4"/>
<comment type="function">
    <text evidence="1 2">Plays an essential role virus particle assembly and budding. Promotes virus assembly and budding by interacting with host proteins of the multivesicular body pathway. The interaction with host E3 ubiquitin ligase SMURF2 facilitates virus budding (By similarity). The interaction with the nucleocapsid and the plasma membrane may also facilitate virus budding. Specific interactions with membrane-associated GP and VP24 during the budding process may also occur (By similarity). May play a role in genome replication (By similarity).</text>
</comment>
<comment type="subunit">
    <text evidence="2">Exists as a dimer until it reorganizes at the plasma membrane into multimeric form. Interacts with host TSG101. Interacts (via PPXY motif) with SMURF2 (via WW domains); the interaction positively regulates virus budding.</text>
</comment>
<comment type="interaction">
    <interactant intactId="EBI-40243950">
        <id>Q1PDC8</id>
    </interactant>
    <interactant intactId="EBI-1564678">
        <id>Q96J02</id>
        <label>ITCH</label>
    </interactant>
    <organismsDiffer>true</organismsDiffer>
    <experiments>2</experiments>
</comment>
<comment type="subcellular location">
    <subcellularLocation>
        <location evidence="2">Virion membrane</location>
        <topology evidence="2">Peripheral membrane protein</topology>
    </subcellularLocation>
    <subcellularLocation>
        <location evidence="2">Host late endosome membrane</location>
        <topology evidence="2">Peripheral membrane protein</topology>
    </subcellularLocation>
    <subcellularLocation>
        <location evidence="2">Host cell membrane</location>
        <topology evidence="2">Peripheral membrane protein</topology>
        <orientation evidence="2">Cytoplasmic side</orientation>
    </subcellularLocation>
    <subcellularLocation>
        <location evidence="2">Host endomembrane system</location>
        <topology evidence="2">Peripheral membrane protein</topology>
    </subcellularLocation>
    <text evidence="2">In virion, localizes on the intravirional side of the membrane. In the host cell, it is found associated with virus-induced membrane proliferation foci and probably also in multivesicular bodies. These VP40-enriched membrane clusters are then redistributed to the plasma membrane where budding takes place.</text>
</comment>
<comment type="domain">
    <text evidence="2 3">Late-budding domains (L domains) are short sequence motifs essential for viral particle budding. They recruit proteins of the host ESCRT machinery (Endosomal Sorting Complex Required for Transport) or ESCRT-associated proteins. VP40 contains one L domain: a PPXY motif which potentially interacts with the WW domain 3 of NEDD4 E3 ubiquitin ligase and the three WW domains of SMURF2 E3 ubiquitin ligase.</text>
</comment>
<comment type="miscellaneous">
    <text>Most abundant protein in the virion.</text>
</comment>
<comment type="similarity">
    <text evidence="4">Belongs to the filoviridae matrix protein VP40 family.</text>
</comment>
<proteinExistence type="evidence at protein level"/>
<organism>
    <name type="scientific">Lake Victoria marburgvirus (strain Ravn-87)</name>
    <name type="common">MARV</name>
    <name type="synonym">Marburg virus (strain Kenya/Ravn/1987)</name>
    <dbReference type="NCBI Taxonomy" id="378809"/>
    <lineage>
        <taxon>Viruses</taxon>
        <taxon>Riboviria</taxon>
        <taxon>Orthornavirae</taxon>
        <taxon>Negarnaviricota</taxon>
        <taxon>Haploviricotina</taxon>
        <taxon>Monjiviricetes</taxon>
        <taxon>Mononegavirales</taxon>
        <taxon>Filoviridae</taxon>
        <taxon>Orthomarburgvirus</taxon>
        <taxon>Orthomarburgvirus marburgense</taxon>
    </lineage>
</organism>
<organismHost>
    <name type="scientific">Chlorocebus aethiops</name>
    <name type="common">Green monkey</name>
    <name type="synonym">Cercopithecus aethiops</name>
    <dbReference type="NCBI Taxonomy" id="9534"/>
</organismHost>
<organismHost>
    <name type="scientific">Homo sapiens</name>
    <name type="common">Human</name>
    <dbReference type="NCBI Taxonomy" id="9606"/>
</organismHost>
<organismHost>
    <name type="scientific">Rousettus aegyptiacus</name>
    <name type="common">Egyptian fruit bat</name>
    <name type="synonym">Pteropus aegyptiacus</name>
    <dbReference type="NCBI Taxonomy" id="9407"/>
</organismHost>